<organism>
    <name type="scientific">Schizosaccharomyces pombe (strain 972 / ATCC 24843)</name>
    <name type="common">Fission yeast</name>
    <dbReference type="NCBI Taxonomy" id="284812"/>
    <lineage>
        <taxon>Eukaryota</taxon>
        <taxon>Fungi</taxon>
        <taxon>Dikarya</taxon>
        <taxon>Ascomycota</taxon>
        <taxon>Taphrinomycotina</taxon>
        <taxon>Schizosaccharomycetes</taxon>
        <taxon>Schizosaccharomycetales</taxon>
        <taxon>Schizosaccharomycetaceae</taxon>
        <taxon>Schizosaccharomyces</taxon>
    </lineage>
</organism>
<reference key="1">
    <citation type="journal article" date="2002" name="Nature">
        <title>The genome sequence of Schizosaccharomyces pombe.</title>
        <authorList>
            <person name="Wood V."/>
            <person name="Gwilliam R."/>
            <person name="Rajandream M.A."/>
            <person name="Lyne M.H."/>
            <person name="Lyne R."/>
            <person name="Stewart A."/>
            <person name="Sgouros J.G."/>
            <person name="Peat N."/>
            <person name="Hayles J."/>
            <person name="Baker S.G."/>
            <person name="Basham D."/>
            <person name="Bowman S."/>
            <person name="Brooks K."/>
            <person name="Brown D."/>
            <person name="Brown S."/>
            <person name="Chillingworth T."/>
            <person name="Churcher C.M."/>
            <person name="Collins M."/>
            <person name="Connor R."/>
            <person name="Cronin A."/>
            <person name="Davis P."/>
            <person name="Feltwell T."/>
            <person name="Fraser A."/>
            <person name="Gentles S."/>
            <person name="Goble A."/>
            <person name="Hamlin N."/>
            <person name="Harris D.E."/>
            <person name="Hidalgo J."/>
            <person name="Hodgson G."/>
            <person name="Holroyd S."/>
            <person name="Hornsby T."/>
            <person name="Howarth S."/>
            <person name="Huckle E.J."/>
            <person name="Hunt S."/>
            <person name="Jagels K."/>
            <person name="James K.D."/>
            <person name="Jones L."/>
            <person name="Jones M."/>
            <person name="Leather S."/>
            <person name="McDonald S."/>
            <person name="McLean J."/>
            <person name="Mooney P."/>
            <person name="Moule S."/>
            <person name="Mungall K.L."/>
            <person name="Murphy L.D."/>
            <person name="Niblett D."/>
            <person name="Odell C."/>
            <person name="Oliver K."/>
            <person name="O'Neil S."/>
            <person name="Pearson D."/>
            <person name="Quail M.A."/>
            <person name="Rabbinowitsch E."/>
            <person name="Rutherford K.M."/>
            <person name="Rutter S."/>
            <person name="Saunders D."/>
            <person name="Seeger K."/>
            <person name="Sharp S."/>
            <person name="Skelton J."/>
            <person name="Simmonds M.N."/>
            <person name="Squares R."/>
            <person name="Squares S."/>
            <person name="Stevens K."/>
            <person name="Taylor K."/>
            <person name="Taylor R.G."/>
            <person name="Tivey A."/>
            <person name="Walsh S.V."/>
            <person name="Warren T."/>
            <person name="Whitehead S."/>
            <person name="Woodward J.R."/>
            <person name="Volckaert G."/>
            <person name="Aert R."/>
            <person name="Robben J."/>
            <person name="Grymonprez B."/>
            <person name="Weltjens I."/>
            <person name="Vanstreels E."/>
            <person name="Rieger M."/>
            <person name="Schaefer M."/>
            <person name="Mueller-Auer S."/>
            <person name="Gabel C."/>
            <person name="Fuchs M."/>
            <person name="Duesterhoeft A."/>
            <person name="Fritzc C."/>
            <person name="Holzer E."/>
            <person name="Moestl D."/>
            <person name="Hilbert H."/>
            <person name="Borzym K."/>
            <person name="Langer I."/>
            <person name="Beck A."/>
            <person name="Lehrach H."/>
            <person name="Reinhardt R."/>
            <person name="Pohl T.M."/>
            <person name="Eger P."/>
            <person name="Zimmermann W."/>
            <person name="Wedler H."/>
            <person name="Wambutt R."/>
            <person name="Purnelle B."/>
            <person name="Goffeau A."/>
            <person name="Cadieu E."/>
            <person name="Dreano S."/>
            <person name="Gloux S."/>
            <person name="Lelaure V."/>
            <person name="Mottier S."/>
            <person name="Galibert F."/>
            <person name="Aves S.J."/>
            <person name="Xiang Z."/>
            <person name="Hunt C."/>
            <person name="Moore K."/>
            <person name="Hurst S.M."/>
            <person name="Lucas M."/>
            <person name="Rochet M."/>
            <person name="Gaillardin C."/>
            <person name="Tallada V.A."/>
            <person name="Garzon A."/>
            <person name="Thode G."/>
            <person name="Daga R.R."/>
            <person name="Cruzado L."/>
            <person name="Jimenez J."/>
            <person name="Sanchez M."/>
            <person name="del Rey F."/>
            <person name="Benito J."/>
            <person name="Dominguez A."/>
            <person name="Revuelta J.L."/>
            <person name="Moreno S."/>
            <person name="Armstrong J."/>
            <person name="Forsburg S.L."/>
            <person name="Cerutti L."/>
            <person name="Lowe T."/>
            <person name="McCombie W.R."/>
            <person name="Paulsen I."/>
            <person name="Potashkin J."/>
            <person name="Shpakovski G.V."/>
            <person name="Ussery D."/>
            <person name="Barrell B.G."/>
            <person name="Nurse P."/>
        </authorList>
    </citation>
    <scope>NUCLEOTIDE SEQUENCE [LARGE SCALE GENOMIC DNA]</scope>
    <source>
        <strain>972 / ATCC 24843</strain>
    </source>
</reference>
<reference key="2">
    <citation type="journal article" date="1997" name="DNA Res.">
        <title>Identification of open reading frames in Schizosaccharomyces pombe cDNAs.</title>
        <authorList>
            <person name="Yoshioka S."/>
            <person name="Kato K."/>
            <person name="Nakai K."/>
            <person name="Okayama H."/>
            <person name="Nojima H."/>
        </authorList>
    </citation>
    <scope>NUCLEOTIDE SEQUENCE [LARGE SCALE MRNA] OF 537-981</scope>
    <source>
        <strain>PR745</strain>
    </source>
</reference>
<keyword id="KW-0436">Ligase</keyword>
<keyword id="KW-0596">Phosphopantetheine</keyword>
<keyword id="KW-0597">Phosphoprotein</keyword>
<keyword id="KW-1185">Reference proteome</keyword>
<name>YQ52_SCHPO</name>
<protein>
    <recommendedName>
        <fullName>Uncharacterized protein C162.02c</fullName>
    </recommendedName>
</protein>
<dbReference type="EMBL" id="CU329672">
    <property type="protein sequence ID" value="CAA19582.1"/>
    <property type="molecule type" value="Genomic_DNA"/>
</dbReference>
<dbReference type="EMBL" id="D89124">
    <property type="protein sequence ID" value="BAA13786.1"/>
    <property type="molecule type" value="mRNA"/>
</dbReference>
<dbReference type="PIR" id="T41029">
    <property type="entry name" value="T41029"/>
</dbReference>
<dbReference type="PIR" id="T42366">
    <property type="entry name" value="T42366"/>
</dbReference>
<dbReference type="RefSeq" id="NP_588242.1">
    <property type="nucleotide sequence ID" value="NM_001023232.2"/>
</dbReference>
<dbReference type="SMR" id="O74419"/>
<dbReference type="BioGRID" id="275505">
    <property type="interactions" value="8"/>
</dbReference>
<dbReference type="STRING" id="284812.O74419"/>
<dbReference type="iPTMnet" id="O74419"/>
<dbReference type="PaxDb" id="4896-SPCC162.02c.1"/>
<dbReference type="EnsemblFungi" id="SPCC162.02c.1">
    <property type="protein sequence ID" value="SPCC162.02c.1:pep"/>
    <property type="gene ID" value="SPCC162.02c"/>
</dbReference>
<dbReference type="KEGG" id="spo:2538929"/>
<dbReference type="PomBase" id="SPCC162.02c"/>
<dbReference type="VEuPathDB" id="FungiDB:SPCC162.02c"/>
<dbReference type="eggNOG" id="KOG1178">
    <property type="taxonomic scope" value="Eukaryota"/>
</dbReference>
<dbReference type="HOGENOM" id="CLU_012570_0_0_1"/>
<dbReference type="InParanoid" id="O74419"/>
<dbReference type="OMA" id="IHMGHEL"/>
<dbReference type="PhylomeDB" id="O74419"/>
<dbReference type="PRO" id="PR:O74419"/>
<dbReference type="Proteomes" id="UP000002485">
    <property type="component" value="Chromosome III"/>
</dbReference>
<dbReference type="GO" id="GO:0005829">
    <property type="term" value="C:cytosol"/>
    <property type="evidence" value="ECO:0007005"/>
    <property type="project" value="PomBase"/>
</dbReference>
<dbReference type="GO" id="GO:0005634">
    <property type="term" value="C:nucleus"/>
    <property type="evidence" value="ECO:0007005"/>
    <property type="project" value="PomBase"/>
</dbReference>
<dbReference type="GO" id="GO:0003824">
    <property type="term" value="F:catalytic activity"/>
    <property type="evidence" value="ECO:0000255"/>
    <property type="project" value="PomBase"/>
</dbReference>
<dbReference type="GO" id="GO:0016874">
    <property type="term" value="F:ligase activity"/>
    <property type="evidence" value="ECO:0007669"/>
    <property type="project" value="UniProtKB-KW"/>
</dbReference>
<dbReference type="CDD" id="cd05235">
    <property type="entry name" value="SDR_e1"/>
    <property type="match status" value="1"/>
</dbReference>
<dbReference type="Gene3D" id="3.40.50.12780">
    <property type="entry name" value="N-terminal domain of ligase-like"/>
    <property type="match status" value="1"/>
</dbReference>
<dbReference type="Gene3D" id="3.40.50.720">
    <property type="entry name" value="NAD(P)-binding Rossmann-like Domain"/>
    <property type="match status" value="1"/>
</dbReference>
<dbReference type="InterPro" id="IPR036736">
    <property type="entry name" value="ACP-like_sf"/>
</dbReference>
<dbReference type="InterPro" id="IPR051414">
    <property type="entry name" value="Adenylate-forming_Reductase"/>
</dbReference>
<dbReference type="InterPro" id="IPR020845">
    <property type="entry name" value="AMP-binding_CS"/>
</dbReference>
<dbReference type="InterPro" id="IPR000873">
    <property type="entry name" value="AMP-dep_synth/lig_dom"/>
</dbReference>
<dbReference type="InterPro" id="IPR042099">
    <property type="entry name" value="ANL_N_sf"/>
</dbReference>
<dbReference type="InterPro" id="IPR013120">
    <property type="entry name" value="Far_NAD-bd"/>
</dbReference>
<dbReference type="InterPro" id="IPR036291">
    <property type="entry name" value="NAD(P)-bd_dom_sf"/>
</dbReference>
<dbReference type="InterPro" id="IPR009081">
    <property type="entry name" value="PP-bd_ACP"/>
</dbReference>
<dbReference type="InterPro" id="IPR010080">
    <property type="entry name" value="Thioester_reductase-like_dom"/>
</dbReference>
<dbReference type="NCBIfam" id="TIGR01746">
    <property type="entry name" value="Thioester-redct"/>
    <property type="match status" value="1"/>
</dbReference>
<dbReference type="PANTHER" id="PTHR43439:SF2">
    <property type="entry name" value="ENZYME, PUTATIVE (JCVI)-RELATED"/>
    <property type="match status" value="1"/>
</dbReference>
<dbReference type="PANTHER" id="PTHR43439">
    <property type="entry name" value="PHENYLACETATE-COENZYME A LIGASE"/>
    <property type="match status" value="1"/>
</dbReference>
<dbReference type="Pfam" id="PF00501">
    <property type="entry name" value="AMP-binding"/>
    <property type="match status" value="1"/>
</dbReference>
<dbReference type="Pfam" id="PF07993">
    <property type="entry name" value="NAD_binding_4"/>
    <property type="match status" value="1"/>
</dbReference>
<dbReference type="SUPFAM" id="SSF56801">
    <property type="entry name" value="Acetyl-CoA synthetase-like"/>
    <property type="match status" value="1"/>
</dbReference>
<dbReference type="SUPFAM" id="SSF47336">
    <property type="entry name" value="ACP-like"/>
    <property type="match status" value="1"/>
</dbReference>
<dbReference type="SUPFAM" id="SSF51735">
    <property type="entry name" value="NAD(P)-binding Rossmann-fold domains"/>
    <property type="match status" value="1"/>
</dbReference>
<dbReference type="PROSITE" id="PS00455">
    <property type="entry name" value="AMP_BINDING"/>
    <property type="match status" value="1"/>
</dbReference>
<dbReference type="PROSITE" id="PS50075">
    <property type="entry name" value="CARRIER"/>
    <property type="match status" value="1"/>
</dbReference>
<feature type="chain" id="PRO_0000193219" description="Uncharacterized protein C162.02c">
    <location>
        <begin position="1"/>
        <end position="981"/>
    </location>
</feature>
<feature type="domain" description="Carrier" evidence="1">
    <location>
        <begin position="535"/>
        <end position="612"/>
    </location>
</feature>
<feature type="modified residue" description="O-(pantetheine 4'-phosphoryl)serine" evidence="1">
    <location>
        <position position="571"/>
    </location>
</feature>
<feature type="sequence conflict" description="In Ref. 2; BAA13786." evidence="2" ref="2">
    <original>F</original>
    <variation>L</variation>
    <location>
        <position position="656"/>
    </location>
</feature>
<accession>O74419</accession>
<accession>P78776</accession>
<gene>
    <name type="ORF">SPCC162.02c</name>
</gene>
<comment type="similarity">
    <text evidence="2">Belongs to the ATP-dependent AMP-binding enzyme family.</text>
</comment>
<proteinExistence type="evidence at transcript level"/>
<evidence type="ECO:0000255" key="1">
    <source>
        <dbReference type="PROSITE-ProRule" id="PRU00258"/>
    </source>
</evidence>
<evidence type="ECO:0000305" key="2"/>
<sequence length="981" mass="109847">MLCDSSESVSFSSISKEEDTPIARLLKNAKETPDHRFISVYNERGIVAKYTYTELLRRVNTIAKFCDDLGLGKTVGIHMGHELDFLCSIFALWATGRTCVIFNQIWSQQVVRVLVKRLNISDLLYHEYKPKFEVDTLNATSLASLPLDIDAPCIRAGLEPEVALINHSSGSTGVPKSMPFLMKKYALGYDYGTPEFMNHLSTPMVMATSFALTTLSWINALYCNGNLLYPSSSISATCTSEAERLAWNVYYALRAGCERLIILPNLLVLTLQIMPDKEECFPACKLVAAGGEMVPANMYHTCKRVLPNATIYPQYGTTESGLVSFLAYNGKDTLHNKELVYFPGKTVKKLMLVTEDNEAVPEKIGCEGFVCVVTDVQSEPYVGDDAETIQSRNSTFINYDGQPAVRFADLAVWNSYKGKLGITIKGRLGRRVKRNGVFFDLKYFDQVVVGLKEVKDAFSFFIFNRFVLVYVPAYNGVDPVTLKQKLNKELRDHHLFSSCFPLADIPRNAAGKVDLKSIETYASKCLSVEDQRLPVLLNPVAIEISKIASKILQNPSLEGKDAPLYSCGLDSIHSVRFFHAIQSHFHLEGPIRYNMNSNCTPNSIASIIQKKSYNVSSITYELLNEDACALSRTIPKLSILPTNGQYFLLTGATGYFGRRFLEYLVKLNISVVCLVRESSDEAAKERLISLVPSLRISSENIIVWAAHVEEIRFGLDDAKWEFLVENVSRIYHMAAEVHWMKSYQELRPANVLGTKTVLELSVMGPKALYFISGGGQQEVELDDDTQSAKASGYALSKYVAELLCRKISDLGHPLIYVIRPGFIIANDGEILSRDFFWRFVATALRMGIWPQSDESQSLVFHISTTDALCMTLTQILEKEADAYAPLLAYDKFDGDEFACICESMKNVKLDFVTLEDWLKALEKDVDEKGEDHPLFALQHATKFALKSSMTPSNGLRNIYPLSETFLTKEAIANGLENLYIE</sequence>